<protein>
    <recommendedName>
        <fullName>Pre-mRNA-splicing factor SLU7</fullName>
    </recommendedName>
</protein>
<feature type="initiator methionine" description="Removed" evidence="2">
    <location>
        <position position="1"/>
    </location>
</feature>
<feature type="chain" id="PRO_0000289193" description="Pre-mRNA-splicing factor SLU7">
    <location>
        <begin position="2"/>
        <end position="586"/>
    </location>
</feature>
<feature type="zinc finger region" description="CCHC-type">
    <location>
        <begin position="118"/>
        <end position="135"/>
    </location>
</feature>
<feature type="region of interest" description="Disordered" evidence="3">
    <location>
        <begin position="1"/>
        <end position="103"/>
    </location>
</feature>
<feature type="region of interest" description="Disordered" evidence="3">
    <location>
        <begin position="206"/>
        <end position="254"/>
    </location>
</feature>
<feature type="region of interest" description="Disordered" evidence="3">
    <location>
        <begin position="491"/>
        <end position="586"/>
    </location>
</feature>
<feature type="short sequence motif" description="Bipartite nuclear localization signal" evidence="1">
    <location>
        <begin position="129"/>
        <end position="169"/>
    </location>
</feature>
<feature type="compositionally biased region" description="Low complexity" evidence="3">
    <location>
        <begin position="1"/>
        <end position="12"/>
    </location>
</feature>
<feature type="compositionally biased region" description="Basic and acidic residues" evidence="3">
    <location>
        <begin position="20"/>
        <end position="44"/>
    </location>
</feature>
<feature type="compositionally biased region" description="Acidic residues" evidence="3">
    <location>
        <begin position="235"/>
        <end position="248"/>
    </location>
</feature>
<feature type="compositionally biased region" description="Basic residues" evidence="3">
    <location>
        <begin position="498"/>
        <end position="510"/>
    </location>
</feature>
<feature type="compositionally biased region" description="Basic and acidic residues" evidence="3">
    <location>
        <begin position="529"/>
        <end position="550"/>
    </location>
</feature>
<feature type="compositionally biased region" description="Basic and acidic residues" evidence="3">
    <location>
        <begin position="557"/>
        <end position="578"/>
    </location>
</feature>
<feature type="modified residue" description="N-acetylserine" evidence="2">
    <location>
        <position position="2"/>
    </location>
</feature>
<feature type="modified residue" description="Phosphoserine" evidence="2">
    <location>
        <position position="215"/>
    </location>
</feature>
<feature type="modified residue" description="Phosphoserine" evidence="2">
    <location>
        <position position="227"/>
    </location>
</feature>
<feature type="modified residue" description="Phosphoserine" evidence="2">
    <location>
        <position position="235"/>
    </location>
</feature>
<feature type="cross-link" description="Glycyl lysine isopeptide (Lys-Gly) (interchain with G-Cter in SUMO2)" evidence="2">
    <location>
        <position position="349"/>
    </location>
</feature>
<feature type="cross-link" description="Glycyl lysine isopeptide (Lys-Gly) (interchain with G-Cter in SUMO2)" evidence="2">
    <location>
        <position position="408"/>
    </location>
</feature>
<name>SLU7_BOVIN</name>
<proteinExistence type="evidence at transcript level"/>
<organism>
    <name type="scientific">Bos taurus</name>
    <name type="common">Bovine</name>
    <dbReference type="NCBI Taxonomy" id="9913"/>
    <lineage>
        <taxon>Eukaryota</taxon>
        <taxon>Metazoa</taxon>
        <taxon>Chordata</taxon>
        <taxon>Craniata</taxon>
        <taxon>Vertebrata</taxon>
        <taxon>Euteleostomi</taxon>
        <taxon>Mammalia</taxon>
        <taxon>Eutheria</taxon>
        <taxon>Laurasiatheria</taxon>
        <taxon>Artiodactyla</taxon>
        <taxon>Ruminantia</taxon>
        <taxon>Pecora</taxon>
        <taxon>Bovidae</taxon>
        <taxon>Bovinae</taxon>
        <taxon>Bos</taxon>
    </lineage>
</organism>
<comment type="function">
    <text evidence="2">Required for pre-mRNA splicing as component of the spliceosome. Participates in the second catalytic step of pre-mRNA splicing, when the free hydroxyl group of exon I attacks the 3'-splice site to generate spliced mRNA and the excised lariat intron. Required for holding exon 1 properly in the spliceosome and for correct AG identification when more than one possible AG exists in 3'-splicing site region. May be involved in the activation of proximal AG. Probably also involved in alternative splicing regulation.</text>
</comment>
<comment type="subunit">
    <text evidence="2">Component of pre-catalytic, catalytic and post-catalytic spliceosomes. Associates with the spliceosome prior to recognition of the 3'-splice site for step II, probably during catalysis of step I.</text>
</comment>
<comment type="subcellular location">
    <subcellularLocation>
        <location evidence="2">Nucleus</location>
    </subcellularLocation>
    <subcellularLocation>
        <location evidence="2">Nucleus speckle</location>
    </subcellularLocation>
    <subcellularLocation>
        <location evidence="2">Cytoplasm</location>
    </subcellularLocation>
    <text evidence="2">Predominantly nuclear. Shuttling between the nucleus and the cytoplasm is regulated by the CCHC-type zinc finger. Upon UV-C stress stimulus, the nuclear concentration of the protein decreases, affecting alternative splicing. Translocates from the nucleus to the cytoplasm after heat shock cell treatment. Accumulates in cytoplasmic vesicle-like organelles after heat shock treatment, which may represent stress granules.</text>
</comment>
<comment type="domain">
    <text evidence="1">The CCHC-type zinc finger is required to retain the protein within the nucleus and prevent its shuttle back to the cytoplasm via the CRM1 pathway.</text>
</comment>
<comment type="similarity">
    <text evidence="4">Belongs to the SLU7 family.</text>
</comment>
<gene>
    <name type="primary">SLU7</name>
</gene>
<accession>Q3ZBE5</accession>
<keyword id="KW-0007">Acetylation</keyword>
<keyword id="KW-0963">Cytoplasm</keyword>
<keyword id="KW-1017">Isopeptide bond</keyword>
<keyword id="KW-0479">Metal-binding</keyword>
<keyword id="KW-0507">mRNA processing</keyword>
<keyword id="KW-0508">mRNA splicing</keyword>
<keyword id="KW-0539">Nucleus</keyword>
<keyword id="KW-0597">Phosphoprotein</keyword>
<keyword id="KW-1185">Reference proteome</keyword>
<keyword id="KW-0747">Spliceosome</keyword>
<keyword id="KW-0832">Ubl conjugation</keyword>
<keyword id="KW-0862">Zinc</keyword>
<keyword id="KW-0863">Zinc-finger</keyword>
<sequence length="586" mass="68203">MSAAAVDAANAAPLSGSKEMSLEEPKKMTREDWRKKKELEEQRKLGNAPAEVDEEGKDINPHIPQYISSVPWYIDPSKRPTLKHQRPQPEKQKQYSSSGEWYKRGVKENSITTKYRKGACENCGAMTHKKKDCFERPRRVGAKFTGTNIAPDEHVQPQLMFDYDGKRDRWNGYNPEEHMKIVEEYAKVDLAKRTLKAQKLQEELASGKLVEQANSPKHQWGEEEPNSQTEKDHNSEDEDEDKYADDIDMPGQNFDSKRRITVRNLRIREDIAKYLRNLDPNSAYYDPKTRAMRENPYANAGKNPDEVSYAGDNFVRYTGDTISMAQTQLFAWEAYDKGSEVHLQADPTKLELLYKSFKVKKEDFKEQQKESILEKYGGQEHLDAPPAELLLAQTEDYVEYSRHGTVIKGQERAVACSKYEEDVKINNHTHIWGSYWKEGRWGYKCCHSFFKYSYCTGEAGKEIANSEECIINDATGEESVKKPQTLMEIHQEKLKEEKKKKKKKKRKHRKSSSESDDEEKKHEKLKKALNAEEARLLHVKEIMQIDERKRPYNSIYETREPTEEEMEAYRMKRQRPDDPMASFLGQ</sequence>
<evidence type="ECO:0000250" key="1"/>
<evidence type="ECO:0000250" key="2">
    <source>
        <dbReference type="UniProtKB" id="O95391"/>
    </source>
</evidence>
<evidence type="ECO:0000256" key="3">
    <source>
        <dbReference type="SAM" id="MobiDB-lite"/>
    </source>
</evidence>
<evidence type="ECO:0000305" key="4"/>
<reference key="1">
    <citation type="journal article" date="2009" name="Science">
        <title>The genome sequence of taurine cattle: a window to ruminant biology and evolution.</title>
        <authorList>
            <consortium name="The bovine genome sequencing and analysis consortium"/>
        </authorList>
    </citation>
    <scope>NUCLEOTIDE SEQUENCE [LARGE SCALE GENOMIC DNA]</scope>
    <source>
        <strain>Hereford</strain>
    </source>
</reference>
<reference key="2">
    <citation type="submission" date="2005-08" db="EMBL/GenBank/DDBJ databases">
        <authorList>
            <consortium name="NIH - Mammalian Gene Collection (MGC) project"/>
        </authorList>
    </citation>
    <scope>NUCLEOTIDE SEQUENCE [LARGE SCALE MRNA] OF 1-505</scope>
    <source>
        <strain>Crossbred X Angus</strain>
        <tissue>Ileum</tissue>
    </source>
</reference>
<dbReference type="EMBL" id="BC103394">
    <property type="protein sequence ID" value="AAI03395.1"/>
    <property type="status" value="ALT_TERM"/>
    <property type="molecule type" value="mRNA"/>
</dbReference>
<dbReference type="RefSeq" id="NP_001160089.1">
    <property type="nucleotide sequence ID" value="NM_001166617.2"/>
</dbReference>
<dbReference type="SMR" id="Q3ZBE5"/>
<dbReference type="FunCoup" id="Q3ZBE5">
    <property type="interactions" value="5412"/>
</dbReference>
<dbReference type="STRING" id="9913.ENSBTAP00000011131"/>
<dbReference type="PaxDb" id="9913-ENSBTAP00000011131"/>
<dbReference type="Ensembl" id="ENSBTAT00000011131.6">
    <property type="protein sequence ID" value="ENSBTAP00000011131.4"/>
    <property type="gene ID" value="ENSBTAG00000008457.6"/>
</dbReference>
<dbReference type="GeneID" id="512318"/>
<dbReference type="KEGG" id="bta:512318"/>
<dbReference type="CTD" id="10569"/>
<dbReference type="VEuPathDB" id="HostDB:ENSBTAG00000008457"/>
<dbReference type="VGNC" id="VGNC:34971">
    <property type="gene designation" value="SLU7"/>
</dbReference>
<dbReference type="eggNOG" id="KOG2560">
    <property type="taxonomic scope" value="Eukaryota"/>
</dbReference>
<dbReference type="GeneTree" id="ENSGT00390000002292"/>
<dbReference type="HOGENOM" id="CLU_019317_2_0_1"/>
<dbReference type="InParanoid" id="Q3ZBE5"/>
<dbReference type="OMA" id="KYAWESQ"/>
<dbReference type="OrthoDB" id="249612at2759"/>
<dbReference type="TreeFam" id="TF105691"/>
<dbReference type="Reactome" id="R-BTA-159236">
    <property type="pathway name" value="Transport of Mature mRNA derived from an Intron-Containing Transcript"/>
</dbReference>
<dbReference type="Reactome" id="R-BTA-72163">
    <property type="pathway name" value="mRNA Splicing - Major Pathway"/>
</dbReference>
<dbReference type="Reactome" id="R-BTA-72187">
    <property type="pathway name" value="mRNA 3'-end processing"/>
</dbReference>
<dbReference type="Reactome" id="R-BTA-73856">
    <property type="pathway name" value="RNA Polymerase II Transcription Termination"/>
</dbReference>
<dbReference type="Proteomes" id="UP000009136">
    <property type="component" value="Chromosome 7"/>
</dbReference>
<dbReference type="Bgee" id="ENSBTAG00000008457">
    <property type="expression patterns" value="Expressed in thymus and 111 other cell types or tissues"/>
</dbReference>
<dbReference type="GO" id="GO:0005737">
    <property type="term" value="C:cytoplasm"/>
    <property type="evidence" value="ECO:0000250"/>
    <property type="project" value="UniProtKB"/>
</dbReference>
<dbReference type="GO" id="GO:0016607">
    <property type="term" value="C:nuclear speck"/>
    <property type="evidence" value="ECO:0007669"/>
    <property type="project" value="UniProtKB-SubCell"/>
</dbReference>
<dbReference type="GO" id="GO:0005634">
    <property type="term" value="C:nucleus"/>
    <property type="evidence" value="ECO:0000250"/>
    <property type="project" value="UniProtKB"/>
</dbReference>
<dbReference type="GO" id="GO:0005681">
    <property type="term" value="C:spliceosomal complex"/>
    <property type="evidence" value="ECO:0000318"/>
    <property type="project" value="GO_Central"/>
</dbReference>
<dbReference type="GO" id="GO:0030628">
    <property type="term" value="F:pre-mRNA 3'-splice site binding"/>
    <property type="evidence" value="ECO:0007669"/>
    <property type="project" value="InterPro"/>
</dbReference>
<dbReference type="GO" id="GO:0008270">
    <property type="term" value="F:zinc ion binding"/>
    <property type="evidence" value="ECO:0007669"/>
    <property type="project" value="UniProtKB-KW"/>
</dbReference>
<dbReference type="GO" id="GO:0034605">
    <property type="term" value="P:cellular response to heat"/>
    <property type="evidence" value="ECO:0000250"/>
    <property type="project" value="UniProtKB"/>
</dbReference>
<dbReference type="GO" id="GO:0006886">
    <property type="term" value="P:intracellular protein transport"/>
    <property type="evidence" value="ECO:0000250"/>
    <property type="project" value="UniProtKB"/>
</dbReference>
<dbReference type="GO" id="GO:0000398">
    <property type="term" value="P:mRNA splicing, via spliceosome"/>
    <property type="evidence" value="ECO:0007669"/>
    <property type="project" value="InterPro"/>
</dbReference>
<dbReference type="GO" id="GO:0008380">
    <property type="term" value="P:RNA splicing"/>
    <property type="evidence" value="ECO:0000318"/>
    <property type="project" value="GO_Central"/>
</dbReference>
<dbReference type="InterPro" id="IPR021715">
    <property type="entry name" value="Slu7_dom"/>
</dbReference>
<dbReference type="InterPro" id="IPR039974">
    <property type="entry name" value="Splicing_factor_SLU7"/>
</dbReference>
<dbReference type="PANTHER" id="PTHR12942:SF2">
    <property type="entry name" value="PRE-MRNA-SPLICING FACTOR SLU7"/>
    <property type="match status" value="1"/>
</dbReference>
<dbReference type="PANTHER" id="PTHR12942">
    <property type="entry name" value="STEP II SPLICING FACTOR SLU7"/>
    <property type="match status" value="1"/>
</dbReference>
<dbReference type="Pfam" id="PF11708">
    <property type="entry name" value="Slu7"/>
    <property type="match status" value="1"/>
</dbReference>